<reference key="1">
    <citation type="journal article" date="2006" name="Science">
        <title>Genome of rice cluster I archaea -- the key methane producers in the rice rhizosphere.</title>
        <authorList>
            <person name="Erkel C."/>
            <person name="Kube M."/>
            <person name="Reinhardt R."/>
            <person name="Liesack W."/>
        </authorList>
    </citation>
    <scope>NUCLEOTIDE SEQUENCE [LARGE SCALE GENOMIC DNA]</scope>
    <source>
        <strain>DSM 22066 / NBRC 105507 / MRE50</strain>
    </source>
</reference>
<evidence type="ECO:0000255" key="1">
    <source>
        <dbReference type="HAMAP-Rule" id="MF_01675"/>
    </source>
</evidence>
<protein>
    <recommendedName>
        <fullName evidence="1">O-phospho-L-seryl-tRNA:Cys-tRNA synthase 2</fullName>
        <ecNumber evidence="1">2.5.1.73</ecNumber>
    </recommendedName>
    <alternativeName>
        <fullName evidence="1">Sep-tRNA:Cys-tRNA synthase 2</fullName>
        <shortName evidence="1">SepCysS 2</shortName>
    </alternativeName>
</protein>
<sequence>MIQLSNPRINKTFEALFALEDIREVFRQSLPTGLSSAEEQALKGKLAEIRKYLDEIEADGVGNGARQKYTGKIGSLDVRTREEEYINIHPIQAAGRLTPEARKAIIAYGDGYSTCDYCRKPFRLDKITKPGIQDFHGDLARWLNMDQARVVPGARRGFQAVASALVEKGDSVIVSALAHYTEFLAVEQAGGVVKEVPKNEQNLITADATAQKIEDVRRTTGKLPVLIMIDHFDYMFANEHDVYGIAKVAKQYGIPFLYNGAYTVGIAPVDGKKIGADFVVGSGHKSMASVAPSGVLATTDEFAAKVFRTTQMVGDVTNRKFGIKEVENMGCTLMGGTLLSMIASFPAVVKRSQPQNWEDEVRKSNYFLEQFRRVQGSNVLSEWPRKHTLTKVDTTGSYNKVAETHKRRGYFFNDELTAKGIIGEFAGATKTWKLNTYGLSWEKTKYLSEAFLDIARKYDLPIN</sequence>
<accession>Q0W486</accession>
<organism>
    <name type="scientific">Methanocella arvoryzae (strain DSM 22066 / NBRC 105507 / MRE50)</name>
    <dbReference type="NCBI Taxonomy" id="351160"/>
    <lineage>
        <taxon>Archaea</taxon>
        <taxon>Methanobacteriati</taxon>
        <taxon>Methanobacteriota</taxon>
        <taxon>Stenosarchaea group</taxon>
        <taxon>Methanomicrobia</taxon>
        <taxon>Methanocellales</taxon>
        <taxon>Methanocellaceae</taxon>
        <taxon>Methanocella</taxon>
    </lineage>
</organism>
<proteinExistence type="inferred from homology"/>
<dbReference type="EC" id="2.5.1.73" evidence="1"/>
<dbReference type="EMBL" id="AM114193">
    <property type="protein sequence ID" value="CAJ36807.1"/>
    <property type="molecule type" value="Genomic_DNA"/>
</dbReference>
<dbReference type="RefSeq" id="WP_012035753.1">
    <property type="nucleotide sequence ID" value="NC_009464.1"/>
</dbReference>
<dbReference type="SMR" id="Q0W486"/>
<dbReference type="STRING" id="351160.RCIX1553"/>
<dbReference type="GeneID" id="5144618"/>
<dbReference type="KEGG" id="rci:RCIX1553"/>
<dbReference type="PATRIC" id="fig|351160.9.peg.1468"/>
<dbReference type="eggNOG" id="arCOG00091">
    <property type="taxonomic scope" value="Archaea"/>
</dbReference>
<dbReference type="OrthoDB" id="5817at2157"/>
<dbReference type="Proteomes" id="UP000000663">
    <property type="component" value="Chromosome"/>
</dbReference>
<dbReference type="GO" id="GO:0043766">
    <property type="term" value="F:Sep-tRNA:Cys-tRNA synthase activity"/>
    <property type="evidence" value="ECO:0007669"/>
    <property type="project" value="UniProtKB-UniRule"/>
</dbReference>
<dbReference type="GO" id="GO:0006412">
    <property type="term" value="P:translation"/>
    <property type="evidence" value="ECO:0007669"/>
    <property type="project" value="UniProtKB-KW"/>
</dbReference>
<dbReference type="Gene3D" id="3.90.1150.10">
    <property type="entry name" value="Aspartate Aminotransferase, domain 1"/>
    <property type="match status" value="1"/>
</dbReference>
<dbReference type="Gene3D" id="3.40.640.10">
    <property type="entry name" value="Type I PLP-dependent aspartate aminotransferase-like (Major domain)"/>
    <property type="match status" value="1"/>
</dbReference>
<dbReference type="HAMAP" id="MF_01675">
    <property type="entry name" value="Sep_Cys_tRNA_synth"/>
    <property type="match status" value="1"/>
</dbReference>
<dbReference type="InterPro" id="IPR000192">
    <property type="entry name" value="Aminotrans_V_dom"/>
</dbReference>
<dbReference type="InterPro" id="IPR015424">
    <property type="entry name" value="PyrdxlP-dep_Trfase"/>
</dbReference>
<dbReference type="InterPro" id="IPR015421">
    <property type="entry name" value="PyrdxlP-dep_Trfase_major"/>
</dbReference>
<dbReference type="InterPro" id="IPR015422">
    <property type="entry name" value="PyrdxlP-dep_Trfase_small"/>
</dbReference>
<dbReference type="InterPro" id="IPR013375">
    <property type="entry name" value="Sep_Cys-tRNA_synth_arc"/>
</dbReference>
<dbReference type="NCBIfam" id="NF006810">
    <property type="entry name" value="PRK09331.1"/>
    <property type="match status" value="1"/>
</dbReference>
<dbReference type="NCBIfam" id="TIGR02539">
    <property type="entry name" value="SepCysS"/>
    <property type="match status" value="1"/>
</dbReference>
<dbReference type="PANTHER" id="PTHR43586">
    <property type="entry name" value="CYSTEINE DESULFURASE"/>
    <property type="match status" value="1"/>
</dbReference>
<dbReference type="PANTHER" id="PTHR43586:SF3">
    <property type="entry name" value="O-PHOSPHO-L-SERYL-TRNA:CYS-TRNA SYNTHASE"/>
    <property type="match status" value="1"/>
</dbReference>
<dbReference type="Pfam" id="PF00266">
    <property type="entry name" value="Aminotran_5"/>
    <property type="match status" value="1"/>
</dbReference>
<dbReference type="SUPFAM" id="SSF53383">
    <property type="entry name" value="PLP-dependent transferases"/>
    <property type="match status" value="1"/>
</dbReference>
<gene>
    <name type="ordered locus">UNCMA_14250</name>
    <name type="ORF">RCIX1553</name>
</gene>
<name>SPSS2_METAR</name>
<keyword id="KW-0648">Protein biosynthesis</keyword>
<keyword id="KW-0663">Pyridoxal phosphate</keyword>
<keyword id="KW-1185">Reference proteome</keyword>
<keyword id="KW-0808">Transferase</keyword>
<feature type="chain" id="PRO_0000359466" description="O-phospho-L-seryl-tRNA:Cys-tRNA synthase 2">
    <location>
        <begin position="1"/>
        <end position="463"/>
    </location>
</feature>
<feature type="binding site" evidence="1">
    <location>
        <begin position="154"/>
        <end position="155"/>
    </location>
    <ligand>
        <name>pyridoxal 5'-phosphate</name>
        <dbReference type="ChEBI" id="CHEBI:597326"/>
    </ligand>
</feature>
<feature type="binding site" evidence="1">
    <location>
        <position position="259"/>
    </location>
    <ligand>
        <name>pyridoxal 5'-phosphate</name>
        <dbReference type="ChEBI" id="CHEBI:597326"/>
    </ligand>
</feature>
<feature type="binding site" evidence="1">
    <location>
        <begin position="282"/>
        <end position="284"/>
    </location>
    <ligand>
        <name>pyridoxal 5'-phosphate</name>
        <dbReference type="ChEBI" id="CHEBI:597326"/>
    </ligand>
</feature>
<feature type="modified residue" description="N6-(pyridoxal phosphate)lysine" evidence="1">
    <location>
        <position position="285"/>
    </location>
</feature>
<comment type="function">
    <text evidence="1">Converts O-phospho-L-seryl-tRNA(Cys) (Sep-tRNA(Cys)) to L-cysteinyl-tRNA(Cys) (Cys-tRNA(Cys)).</text>
</comment>
<comment type="catalytic activity">
    <reaction evidence="1">
        <text>O-phospho-L-seryl-tRNA(Cys) + hydrogen sulfide + H(+) = L-cysteinyl-tRNA(Cys) + phosphate</text>
        <dbReference type="Rhea" id="RHEA:25686"/>
        <dbReference type="Rhea" id="RHEA-COMP:9679"/>
        <dbReference type="Rhea" id="RHEA-COMP:9719"/>
        <dbReference type="ChEBI" id="CHEBI:15378"/>
        <dbReference type="ChEBI" id="CHEBI:29919"/>
        <dbReference type="ChEBI" id="CHEBI:43474"/>
        <dbReference type="ChEBI" id="CHEBI:78517"/>
        <dbReference type="ChEBI" id="CHEBI:78551"/>
        <dbReference type="EC" id="2.5.1.73"/>
    </reaction>
</comment>
<comment type="cofactor">
    <cofactor evidence="1">
        <name>pyridoxal 5'-phosphate</name>
        <dbReference type="ChEBI" id="CHEBI:597326"/>
    </cofactor>
</comment>
<comment type="subunit">
    <text evidence="1">Homodimer. Interacts with SepRS.</text>
</comment>
<comment type="similarity">
    <text evidence="1">Belongs to the SepCysS family.</text>
</comment>